<gene>
    <name evidence="1" type="primary">rpsJ</name>
    <name type="ordered locus">RBAM_001400</name>
</gene>
<comment type="function">
    <text evidence="1">Involved in the binding of tRNA to the ribosomes.</text>
</comment>
<comment type="subunit">
    <text evidence="1">Part of the 30S ribosomal subunit.</text>
</comment>
<comment type="similarity">
    <text evidence="1">Belongs to the universal ribosomal protein uS10 family.</text>
</comment>
<name>RS10_BACVZ</name>
<organism>
    <name type="scientific">Bacillus velezensis (strain DSM 23117 / BGSC 10A6 / LMG 26770 / FZB42)</name>
    <name type="common">Bacillus amyloliquefaciens subsp. plantarum</name>
    <dbReference type="NCBI Taxonomy" id="326423"/>
    <lineage>
        <taxon>Bacteria</taxon>
        <taxon>Bacillati</taxon>
        <taxon>Bacillota</taxon>
        <taxon>Bacilli</taxon>
        <taxon>Bacillales</taxon>
        <taxon>Bacillaceae</taxon>
        <taxon>Bacillus</taxon>
        <taxon>Bacillus amyloliquefaciens group</taxon>
    </lineage>
</organism>
<proteinExistence type="inferred from homology"/>
<evidence type="ECO:0000255" key="1">
    <source>
        <dbReference type="HAMAP-Rule" id="MF_00508"/>
    </source>
</evidence>
<evidence type="ECO:0000305" key="2"/>
<reference key="1">
    <citation type="journal article" date="2007" name="Nat. Biotechnol.">
        <title>Comparative analysis of the complete genome sequence of the plant growth-promoting bacterium Bacillus amyloliquefaciens FZB42.</title>
        <authorList>
            <person name="Chen X.H."/>
            <person name="Koumoutsi A."/>
            <person name="Scholz R."/>
            <person name="Eisenreich A."/>
            <person name="Schneider K."/>
            <person name="Heinemeyer I."/>
            <person name="Morgenstern B."/>
            <person name="Voss B."/>
            <person name="Hess W.R."/>
            <person name="Reva O."/>
            <person name="Junge H."/>
            <person name="Voigt B."/>
            <person name="Jungblut P.R."/>
            <person name="Vater J."/>
            <person name="Suessmuth R."/>
            <person name="Liesegang H."/>
            <person name="Strittmatter A."/>
            <person name="Gottschalk G."/>
            <person name="Borriss R."/>
        </authorList>
    </citation>
    <scope>NUCLEOTIDE SEQUENCE [LARGE SCALE GENOMIC DNA]</scope>
    <source>
        <strain>DSM 23117 / BGSC 10A6 / LMG 26770 / FZB42</strain>
    </source>
</reference>
<feature type="chain" id="PRO_1000014986" description="Small ribosomal subunit protein uS10">
    <location>
        <begin position="1"/>
        <end position="102"/>
    </location>
</feature>
<dbReference type="EMBL" id="CP000560">
    <property type="protein sequence ID" value="ABS72563.1"/>
    <property type="molecule type" value="Genomic_DNA"/>
</dbReference>
<dbReference type="RefSeq" id="WP_003156464.1">
    <property type="nucleotide sequence ID" value="NC_009725.2"/>
</dbReference>
<dbReference type="SMR" id="A7Z0N7"/>
<dbReference type="GeneID" id="93079279"/>
<dbReference type="KEGG" id="bay:RBAM_001400"/>
<dbReference type="HOGENOM" id="CLU_122625_1_3_9"/>
<dbReference type="Proteomes" id="UP000001120">
    <property type="component" value="Chromosome"/>
</dbReference>
<dbReference type="GO" id="GO:1990904">
    <property type="term" value="C:ribonucleoprotein complex"/>
    <property type="evidence" value="ECO:0007669"/>
    <property type="project" value="UniProtKB-KW"/>
</dbReference>
<dbReference type="GO" id="GO:0005840">
    <property type="term" value="C:ribosome"/>
    <property type="evidence" value="ECO:0007669"/>
    <property type="project" value="UniProtKB-KW"/>
</dbReference>
<dbReference type="GO" id="GO:0003735">
    <property type="term" value="F:structural constituent of ribosome"/>
    <property type="evidence" value="ECO:0007669"/>
    <property type="project" value="InterPro"/>
</dbReference>
<dbReference type="GO" id="GO:0000049">
    <property type="term" value="F:tRNA binding"/>
    <property type="evidence" value="ECO:0007669"/>
    <property type="project" value="UniProtKB-UniRule"/>
</dbReference>
<dbReference type="GO" id="GO:0006412">
    <property type="term" value="P:translation"/>
    <property type="evidence" value="ECO:0007669"/>
    <property type="project" value="UniProtKB-UniRule"/>
</dbReference>
<dbReference type="FunFam" id="3.30.70.600:FF:000001">
    <property type="entry name" value="30S ribosomal protein S10"/>
    <property type="match status" value="1"/>
</dbReference>
<dbReference type="Gene3D" id="3.30.70.600">
    <property type="entry name" value="Ribosomal protein S10 domain"/>
    <property type="match status" value="1"/>
</dbReference>
<dbReference type="HAMAP" id="MF_00508">
    <property type="entry name" value="Ribosomal_uS10"/>
    <property type="match status" value="1"/>
</dbReference>
<dbReference type="InterPro" id="IPR001848">
    <property type="entry name" value="Ribosomal_uS10"/>
</dbReference>
<dbReference type="InterPro" id="IPR018268">
    <property type="entry name" value="Ribosomal_uS10_CS"/>
</dbReference>
<dbReference type="InterPro" id="IPR027486">
    <property type="entry name" value="Ribosomal_uS10_dom"/>
</dbReference>
<dbReference type="InterPro" id="IPR036838">
    <property type="entry name" value="Ribosomal_uS10_dom_sf"/>
</dbReference>
<dbReference type="NCBIfam" id="NF001861">
    <property type="entry name" value="PRK00596.1"/>
    <property type="match status" value="1"/>
</dbReference>
<dbReference type="NCBIfam" id="TIGR01049">
    <property type="entry name" value="rpsJ_bact"/>
    <property type="match status" value="1"/>
</dbReference>
<dbReference type="PANTHER" id="PTHR11700">
    <property type="entry name" value="30S RIBOSOMAL PROTEIN S10 FAMILY MEMBER"/>
    <property type="match status" value="1"/>
</dbReference>
<dbReference type="Pfam" id="PF00338">
    <property type="entry name" value="Ribosomal_S10"/>
    <property type="match status" value="1"/>
</dbReference>
<dbReference type="PRINTS" id="PR00971">
    <property type="entry name" value="RIBOSOMALS10"/>
</dbReference>
<dbReference type="SMART" id="SM01403">
    <property type="entry name" value="Ribosomal_S10"/>
    <property type="match status" value="1"/>
</dbReference>
<dbReference type="SUPFAM" id="SSF54999">
    <property type="entry name" value="Ribosomal protein S10"/>
    <property type="match status" value="1"/>
</dbReference>
<dbReference type="PROSITE" id="PS00361">
    <property type="entry name" value="RIBOSOMAL_S10"/>
    <property type="match status" value="1"/>
</dbReference>
<accession>A7Z0N7</accession>
<protein>
    <recommendedName>
        <fullName evidence="1">Small ribosomal subunit protein uS10</fullName>
    </recommendedName>
    <alternativeName>
        <fullName evidence="2">30S ribosomal protein S10</fullName>
    </alternativeName>
</protein>
<keyword id="KW-0687">Ribonucleoprotein</keyword>
<keyword id="KW-0689">Ribosomal protein</keyword>
<sequence>MAKQKIRIRLKAYDHRILDQSAEKIVETAKRSGASVSGPIPLPTEKSVYTILRAVHKYKDSREQFEMRTHKRLIDIVNPTPQTVDALMRLDLPSGVDIEIKL</sequence>